<keyword id="KW-0963">Cytoplasm</keyword>
<keyword id="KW-0238">DNA-binding</keyword>
<keyword id="KW-0408">Iron</keyword>
<keyword id="KW-0479">Metal-binding</keyword>
<keyword id="KW-0678">Repressor</keyword>
<keyword id="KW-0804">Transcription</keyword>
<keyword id="KW-0805">Transcription regulation</keyword>
<keyword id="KW-0862">Zinc</keyword>
<proteinExistence type="inferred from homology"/>
<sequence length="150" mass="17730">MRRLETLESILERLRMSIKKNGLKNSKQREEVVSVLYRSGTHLSPEEITHSIRQKDKNTSISSVYRILNFLEKENFICVLETSKSGRRYEIAAKEHHDHIICLHCGKIIEFADPEIEHRQNEVVKKYQAKLISHDMKMFVWCKECQESDD</sequence>
<evidence type="ECO:0000250" key="1"/>
<evidence type="ECO:0000305" key="2"/>
<organism>
    <name type="scientific">Helicobacter pylori (strain J99 / ATCC 700824)</name>
    <name type="common">Campylobacter pylori J99</name>
    <dbReference type="NCBI Taxonomy" id="85963"/>
    <lineage>
        <taxon>Bacteria</taxon>
        <taxon>Pseudomonadati</taxon>
        <taxon>Campylobacterota</taxon>
        <taxon>Epsilonproteobacteria</taxon>
        <taxon>Campylobacterales</taxon>
        <taxon>Helicobacteraceae</taxon>
        <taxon>Helicobacter</taxon>
    </lineage>
</organism>
<name>FUR_HELPJ</name>
<reference key="1">
    <citation type="journal article" date="1999" name="Nature">
        <title>Genomic sequence comparison of two unrelated isolates of the human gastric pathogen Helicobacter pylori.</title>
        <authorList>
            <person name="Alm R.A."/>
            <person name="Ling L.-S.L."/>
            <person name="Moir D.T."/>
            <person name="King B.L."/>
            <person name="Brown E.D."/>
            <person name="Doig P.C."/>
            <person name="Smith D.R."/>
            <person name="Noonan B."/>
            <person name="Guild B.C."/>
            <person name="deJonge B.L."/>
            <person name="Carmel G."/>
            <person name="Tummino P.J."/>
            <person name="Caruso A."/>
            <person name="Uria-Nickelsen M."/>
            <person name="Mills D.M."/>
            <person name="Ives C."/>
            <person name="Gibson R."/>
            <person name="Merberg D."/>
            <person name="Mills S.D."/>
            <person name="Jiang Q."/>
            <person name="Taylor D.E."/>
            <person name="Vovis G.F."/>
            <person name="Trust T.J."/>
        </authorList>
    </citation>
    <scope>NUCLEOTIDE SEQUENCE [LARGE SCALE GENOMIC DNA]</scope>
    <source>
        <strain>J99 / ATCC 700824</strain>
    </source>
</reference>
<feature type="chain" id="PRO_0000095556" description="Ferric uptake regulation protein">
    <location>
        <begin position="1"/>
        <end position="150"/>
    </location>
</feature>
<feature type="region of interest" description="DNA-binding" evidence="1">
    <location>
        <begin position="1"/>
        <end position="93"/>
    </location>
</feature>
<feature type="region of interest" description="Dimerization" evidence="1">
    <location>
        <begin position="94"/>
        <end position="150"/>
    </location>
</feature>
<feature type="binding site" evidence="1">
    <location>
        <position position="42"/>
    </location>
    <ligand>
        <name>Zn(2+)</name>
        <dbReference type="ChEBI" id="CHEBI:29105"/>
    </ligand>
</feature>
<feature type="binding site" evidence="1">
    <location>
        <position position="90"/>
    </location>
    <ligand>
        <name>Zn(2+)</name>
        <dbReference type="ChEBI" id="CHEBI:29105"/>
    </ligand>
</feature>
<feature type="binding site" evidence="1">
    <location>
        <position position="96"/>
    </location>
    <ligand>
        <name>Fe cation</name>
        <dbReference type="ChEBI" id="CHEBI:24875"/>
    </ligand>
</feature>
<feature type="binding site" evidence="1">
    <location>
        <position position="98"/>
    </location>
    <ligand>
        <name>Fe cation</name>
        <dbReference type="ChEBI" id="CHEBI:24875"/>
    </ligand>
</feature>
<feature type="binding site" evidence="1">
    <location>
        <position position="99"/>
    </location>
    <ligand>
        <name>Zn(2+)</name>
        <dbReference type="ChEBI" id="CHEBI:29105"/>
    </ligand>
</feature>
<feature type="binding site" evidence="1">
    <location>
        <position position="102"/>
    </location>
    <ligand>
        <name>Zn(2+)</name>
        <dbReference type="ChEBI" id="CHEBI:29105"/>
    </ligand>
</feature>
<feature type="binding site" evidence="1">
    <location>
        <position position="105"/>
    </location>
    <ligand>
        <name>Zn(2+)</name>
        <dbReference type="ChEBI" id="CHEBI:29105"/>
    </ligand>
</feature>
<feature type="binding site" evidence="1">
    <location>
        <position position="110"/>
    </location>
    <ligand>
        <name>Zn(2+)</name>
        <dbReference type="ChEBI" id="CHEBI:29105"/>
    </ligand>
</feature>
<feature type="binding site" evidence="1">
    <location>
        <position position="117"/>
    </location>
    <ligand>
        <name>Fe cation</name>
        <dbReference type="ChEBI" id="CHEBI:24875"/>
    </ligand>
</feature>
<feature type="binding site" evidence="1">
    <location>
        <position position="134"/>
    </location>
    <ligand>
        <name>Fe cation</name>
        <dbReference type="ChEBI" id="CHEBI:24875"/>
    </ligand>
</feature>
<dbReference type="EMBL" id="AE001439">
    <property type="protein sequence ID" value="AAD05968.1"/>
    <property type="molecule type" value="Genomic_DNA"/>
</dbReference>
<dbReference type="PIR" id="C71939">
    <property type="entry name" value="C71939"/>
</dbReference>
<dbReference type="RefSeq" id="WP_001253271.1">
    <property type="nucleotide sequence ID" value="NZ_CP011330.1"/>
</dbReference>
<dbReference type="SMR" id="Q9ZM26"/>
<dbReference type="KEGG" id="hpj:jhp_0397"/>
<dbReference type="PATRIC" id="fig|85963.30.peg.613"/>
<dbReference type="eggNOG" id="COG0735">
    <property type="taxonomic scope" value="Bacteria"/>
</dbReference>
<dbReference type="Proteomes" id="UP000000804">
    <property type="component" value="Chromosome"/>
</dbReference>
<dbReference type="CollecTF" id="EXPREG_00001800"/>
<dbReference type="GO" id="GO:0005829">
    <property type="term" value="C:cytosol"/>
    <property type="evidence" value="ECO:0007669"/>
    <property type="project" value="TreeGrafter"/>
</dbReference>
<dbReference type="GO" id="GO:0003700">
    <property type="term" value="F:DNA-binding transcription factor activity"/>
    <property type="evidence" value="ECO:0007669"/>
    <property type="project" value="InterPro"/>
</dbReference>
<dbReference type="GO" id="GO:0000976">
    <property type="term" value="F:transcription cis-regulatory region binding"/>
    <property type="evidence" value="ECO:0007669"/>
    <property type="project" value="TreeGrafter"/>
</dbReference>
<dbReference type="GO" id="GO:0008270">
    <property type="term" value="F:zinc ion binding"/>
    <property type="evidence" value="ECO:0007669"/>
    <property type="project" value="TreeGrafter"/>
</dbReference>
<dbReference type="GO" id="GO:0045892">
    <property type="term" value="P:negative regulation of DNA-templated transcription"/>
    <property type="evidence" value="ECO:0007669"/>
    <property type="project" value="TreeGrafter"/>
</dbReference>
<dbReference type="GO" id="GO:1900705">
    <property type="term" value="P:negative regulation of siderophore biosynthetic process"/>
    <property type="evidence" value="ECO:0007669"/>
    <property type="project" value="TreeGrafter"/>
</dbReference>
<dbReference type="GO" id="GO:0006355">
    <property type="term" value="P:regulation of DNA-templated transcription"/>
    <property type="evidence" value="ECO:0000269"/>
    <property type="project" value="CollecTF"/>
</dbReference>
<dbReference type="CDD" id="cd07153">
    <property type="entry name" value="Fur_like"/>
    <property type="match status" value="1"/>
</dbReference>
<dbReference type="FunFam" id="1.10.10.10:FF:000330">
    <property type="entry name" value="Ferric uptake regulation protein"/>
    <property type="match status" value="1"/>
</dbReference>
<dbReference type="FunFam" id="3.30.1490.190:FF:000001">
    <property type="entry name" value="Ferric uptake regulation protein"/>
    <property type="match status" value="1"/>
</dbReference>
<dbReference type="Gene3D" id="3.30.1490.190">
    <property type="match status" value="1"/>
</dbReference>
<dbReference type="Gene3D" id="1.10.10.10">
    <property type="entry name" value="Winged helix-like DNA-binding domain superfamily/Winged helix DNA-binding domain"/>
    <property type="match status" value="1"/>
</dbReference>
<dbReference type="InterPro" id="IPR002481">
    <property type="entry name" value="FUR"/>
</dbReference>
<dbReference type="InterPro" id="IPR043135">
    <property type="entry name" value="Fur_C"/>
</dbReference>
<dbReference type="InterPro" id="IPR036388">
    <property type="entry name" value="WH-like_DNA-bd_sf"/>
</dbReference>
<dbReference type="InterPro" id="IPR036390">
    <property type="entry name" value="WH_DNA-bd_sf"/>
</dbReference>
<dbReference type="PANTHER" id="PTHR33202:SF2">
    <property type="entry name" value="FERRIC UPTAKE REGULATION PROTEIN"/>
    <property type="match status" value="1"/>
</dbReference>
<dbReference type="PANTHER" id="PTHR33202">
    <property type="entry name" value="ZINC UPTAKE REGULATION PROTEIN"/>
    <property type="match status" value="1"/>
</dbReference>
<dbReference type="Pfam" id="PF01475">
    <property type="entry name" value="FUR"/>
    <property type="match status" value="1"/>
</dbReference>
<dbReference type="SUPFAM" id="SSF46785">
    <property type="entry name" value="Winged helix' DNA-binding domain"/>
    <property type="match status" value="1"/>
</dbReference>
<accession>Q9ZM26</accession>
<protein>
    <recommendedName>
        <fullName>Ferric uptake regulation protein</fullName>
        <shortName>Ferric uptake regulator</shortName>
    </recommendedName>
</protein>
<gene>
    <name type="primary">fur</name>
    <name type="ordered locus">jhp_0397</name>
</gene>
<comment type="function">
    <text evidence="1">Acts as a global negative controlling element, employing Fe(2+) as a cofactor to bind the operator of the repressed genes.</text>
</comment>
<comment type="subunit">
    <text evidence="1">Homodimer.</text>
</comment>
<comment type="subcellular location">
    <subcellularLocation>
        <location evidence="1">Cytoplasm</location>
    </subcellularLocation>
</comment>
<comment type="similarity">
    <text evidence="2">Belongs to the Fur family.</text>
</comment>